<comment type="function">
    <text>Calmodulin mediates the control of a large number of enzymes, ion channels and other proteins by Ca(2+). Among the enzymes to be stimulated by the calmodulin-Ca(2+) complex are a number of protein kinases and phosphatases.</text>
</comment>
<comment type="miscellaneous">
    <text>This protein has four functional calcium-binding sites.</text>
</comment>
<comment type="similarity">
    <text evidence="3">Belongs to the calmodulin family.</text>
</comment>
<evidence type="ECO:0000250" key="1"/>
<evidence type="ECO:0000255" key="2">
    <source>
        <dbReference type="PROSITE-ProRule" id="PRU00448"/>
    </source>
</evidence>
<evidence type="ECO:0000305" key="3"/>
<organism>
    <name type="scientific">Karlodinium veneficum</name>
    <name type="common">Dinoflagellate</name>
    <name type="synonym">Karlodinium micrum</name>
    <dbReference type="NCBI Taxonomy" id="407301"/>
    <lineage>
        <taxon>Eukaryota</taxon>
        <taxon>Sar</taxon>
        <taxon>Alveolata</taxon>
        <taxon>Dinophyceae</taxon>
        <taxon>Gymnodiniales</taxon>
        <taxon>Kareniaceae</taxon>
        <taxon>Karlodinium</taxon>
    </lineage>
</organism>
<accession>A3E4F9</accession>
<protein>
    <recommendedName>
        <fullName>Calmodulin</fullName>
        <shortName>CaM</shortName>
    </recommendedName>
</protein>
<dbReference type="EMBL" id="DQ884449">
    <property type="protein sequence ID" value="ABI14435.1"/>
    <property type="molecule type" value="mRNA"/>
</dbReference>
<dbReference type="EMBL" id="DQ884450">
    <property type="protein sequence ID" value="ABI14436.1"/>
    <property type="molecule type" value="mRNA"/>
</dbReference>
<dbReference type="EMBL" id="DQ884451">
    <property type="protein sequence ID" value="ABI14437.1"/>
    <property type="molecule type" value="mRNA"/>
</dbReference>
<dbReference type="SMR" id="A3E4F9"/>
<dbReference type="GO" id="GO:0016460">
    <property type="term" value="C:myosin II complex"/>
    <property type="evidence" value="ECO:0007669"/>
    <property type="project" value="TreeGrafter"/>
</dbReference>
<dbReference type="GO" id="GO:0005509">
    <property type="term" value="F:calcium ion binding"/>
    <property type="evidence" value="ECO:0007669"/>
    <property type="project" value="InterPro"/>
</dbReference>
<dbReference type="CDD" id="cd00051">
    <property type="entry name" value="EFh"/>
    <property type="match status" value="2"/>
</dbReference>
<dbReference type="FunFam" id="1.10.238.10:FF:000034">
    <property type="entry name" value="Calmodulin"/>
    <property type="match status" value="1"/>
</dbReference>
<dbReference type="FunFam" id="1.10.238.10:FF:000042">
    <property type="entry name" value="Calmodulin"/>
    <property type="match status" value="1"/>
</dbReference>
<dbReference type="Gene3D" id="1.10.238.10">
    <property type="entry name" value="EF-hand"/>
    <property type="match status" value="3"/>
</dbReference>
<dbReference type="InterPro" id="IPR050230">
    <property type="entry name" value="CALM/Myosin/TropC-like"/>
</dbReference>
<dbReference type="InterPro" id="IPR011992">
    <property type="entry name" value="EF-hand-dom_pair"/>
</dbReference>
<dbReference type="InterPro" id="IPR018247">
    <property type="entry name" value="EF_Hand_1_Ca_BS"/>
</dbReference>
<dbReference type="InterPro" id="IPR002048">
    <property type="entry name" value="EF_hand_dom"/>
</dbReference>
<dbReference type="PANTHER" id="PTHR23048:SF0">
    <property type="entry name" value="CALMODULIN LIKE 3"/>
    <property type="match status" value="1"/>
</dbReference>
<dbReference type="PANTHER" id="PTHR23048">
    <property type="entry name" value="MYOSIN LIGHT CHAIN 1, 3"/>
    <property type="match status" value="1"/>
</dbReference>
<dbReference type="Pfam" id="PF13499">
    <property type="entry name" value="EF-hand_7"/>
    <property type="match status" value="2"/>
</dbReference>
<dbReference type="SMART" id="SM00054">
    <property type="entry name" value="EFh"/>
    <property type="match status" value="4"/>
</dbReference>
<dbReference type="SMART" id="SM01184">
    <property type="entry name" value="efhand_Ca_insen"/>
    <property type="match status" value="1"/>
</dbReference>
<dbReference type="SUPFAM" id="SSF47473">
    <property type="entry name" value="EF-hand"/>
    <property type="match status" value="1"/>
</dbReference>
<dbReference type="PROSITE" id="PS00018">
    <property type="entry name" value="EF_HAND_1"/>
    <property type="match status" value="4"/>
</dbReference>
<dbReference type="PROSITE" id="PS50222">
    <property type="entry name" value="EF_HAND_2"/>
    <property type="match status" value="4"/>
</dbReference>
<name>CALM_KARVE</name>
<proteinExistence type="evidence at transcript level"/>
<reference key="1">
    <citation type="journal article" date="2007" name="Proc. Natl. Acad. Sci. U.S.A.">
        <title>Spliced leader RNA trans-splicing in dinoflagellates.</title>
        <authorList>
            <person name="Zhang H."/>
            <person name="Hou Y."/>
            <person name="Miranda L."/>
            <person name="Campbell D.A."/>
            <person name="Sturm N.R."/>
            <person name="Gaasterland T."/>
            <person name="Lin S."/>
        </authorList>
    </citation>
    <scope>NUCLEOTIDE SEQUENCE [MRNA]</scope>
</reference>
<sequence>MADQLTEEQIAEFKEAFSLFDKDGDGTITTKELGTVMRSLGQNPTEAELQDMINEVDADGNGTIDFPEFLSLMARKMKDTDTEEELIEAFKVFDRDGNGFISAAELRHVMTNLGEKLTDEEVDEMIREADVDGDGQINYEEFVKMMMAK</sequence>
<keyword id="KW-0007">Acetylation</keyword>
<keyword id="KW-0106">Calcium</keyword>
<keyword id="KW-0479">Metal-binding</keyword>
<keyword id="KW-0488">Methylation</keyword>
<keyword id="KW-0677">Repeat</keyword>
<feature type="initiator methionine" description="Removed" evidence="1">
    <location>
        <position position="1"/>
    </location>
</feature>
<feature type="chain" id="PRO_0000334495" description="Calmodulin">
    <location>
        <begin position="2"/>
        <end position="149"/>
    </location>
</feature>
<feature type="domain" description="EF-hand 1" evidence="2">
    <location>
        <begin position="8"/>
        <end position="43"/>
    </location>
</feature>
<feature type="domain" description="EF-hand 2" evidence="2">
    <location>
        <begin position="44"/>
        <end position="79"/>
    </location>
</feature>
<feature type="domain" description="EF-hand 3" evidence="2">
    <location>
        <begin position="81"/>
        <end position="116"/>
    </location>
</feature>
<feature type="domain" description="EF-hand 4" evidence="2">
    <location>
        <begin position="117"/>
        <end position="149"/>
    </location>
</feature>
<feature type="binding site" evidence="2">
    <location>
        <position position="21"/>
    </location>
    <ligand>
        <name>Ca(2+)</name>
        <dbReference type="ChEBI" id="CHEBI:29108"/>
        <label>1</label>
    </ligand>
</feature>
<feature type="binding site" evidence="2">
    <location>
        <position position="23"/>
    </location>
    <ligand>
        <name>Ca(2+)</name>
        <dbReference type="ChEBI" id="CHEBI:29108"/>
        <label>1</label>
    </ligand>
</feature>
<feature type="binding site" evidence="2">
    <location>
        <position position="25"/>
    </location>
    <ligand>
        <name>Ca(2+)</name>
        <dbReference type="ChEBI" id="CHEBI:29108"/>
        <label>1</label>
    </ligand>
</feature>
<feature type="binding site" evidence="2">
    <location>
        <position position="27"/>
    </location>
    <ligand>
        <name>Ca(2+)</name>
        <dbReference type="ChEBI" id="CHEBI:29108"/>
        <label>1</label>
    </ligand>
</feature>
<feature type="binding site" evidence="2">
    <location>
        <position position="32"/>
    </location>
    <ligand>
        <name>Ca(2+)</name>
        <dbReference type="ChEBI" id="CHEBI:29108"/>
        <label>1</label>
    </ligand>
</feature>
<feature type="binding site" evidence="2">
    <location>
        <position position="57"/>
    </location>
    <ligand>
        <name>Ca(2+)</name>
        <dbReference type="ChEBI" id="CHEBI:29108"/>
        <label>2</label>
    </ligand>
</feature>
<feature type="binding site" evidence="2">
    <location>
        <position position="59"/>
    </location>
    <ligand>
        <name>Ca(2+)</name>
        <dbReference type="ChEBI" id="CHEBI:29108"/>
        <label>2</label>
    </ligand>
</feature>
<feature type="binding site" evidence="2">
    <location>
        <position position="61"/>
    </location>
    <ligand>
        <name>Ca(2+)</name>
        <dbReference type="ChEBI" id="CHEBI:29108"/>
        <label>2</label>
    </ligand>
</feature>
<feature type="binding site" evidence="2">
    <location>
        <position position="63"/>
    </location>
    <ligand>
        <name>Ca(2+)</name>
        <dbReference type="ChEBI" id="CHEBI:29108"/>
        <label>2</label>
    </ligand>
</feature>
<feature type="binding site" evidence="2">
    <location>
        <position position="68"/>
    </location>
    <ligand>
        <name>Ca(2+)</name>
        <dbReference type="ChEBI" id="CHEBI:29108"/>
        <label>2</label>
    </ligand>
</feature>
<feature type="binding site" evidence="2">
    <location>
        <position position="94"/>
    </location>
    <ligand>
        <name>Ca(2+)</name>
        <dbReference type="ChEBI" id="CHEBI:29108"/>
        <label>3</label>
    </ligand>
</feature>
<feature type="binding site" evidence="2">
    <location>
        <position position="96"/>
    </location>
    <ligand>
        <name>Ca(2+)</name>
        <dbReference type="ChEBI" id="CHEBI:29108"/>
        <label>3</label>
    </ligand>
</feature>
<feature type="binding site" evidence="2">
    <location>
        <position position="98"/>
    </location>
    <ligand>
        <name>Ca(2+)</name>
        <dbReference type="ChEBI" id="CHEBI:29108"/>
        <label>3</label>
    </ligand>
</feature>
<feature type="binding site" evidence="2">
    <location>
        <position position="105"/>
    </location>
    <ligand>
        <name>Ca(2+)</name>
        <dbReference type="ChEBI" id="CHEBI:29108"/>
        <label>3</label>
    </ligand>
</feature>
<feature type="binding site" evidence="2">
    <location>
        <position position="130"/>
    </location>
    <ligand>
        <name>Ca(2+)</name>
        <dbReference type="ChEBI" id="CHEBI:29108"/>
        <label>4</label>
    </ligand>
</feature>
<feature type="binding site" evidence="2">
    <location>
        <position position="132"/>
    </location>
    <ligand>
        <name>Ca(2+)</name>
        <dbReference type="ChEBI" id="CHEBI:29108"/>
        <label>4</label>
    </ligand>
</feature>
<feature type="binding site" evidence="2">
    <location>
        <position position="134"/>
    </location>
    <ligand>
        <name>Ca(2+)</name>
        <dbReference type="ChEBI" id="CHEBI:29108"/>
        <label>4</label>
    </ligand>
</feature>
<feature type="binding site" evidence="2">
    <location>
        <position position="136"/>
    </location>
    <ligand>
        <name>Ca(2+)</name>
        <dbReference type="ChEBI" id="CHEBI:29108"/>
        <label>4</label>
    </ligand>
</feature>
<feature type="binding site" evidence="2">
    <location>
        <position position="141"/>
    </location>
    <ligand>
        <name>Ca(2+)</name>
        <dbReference type="ChEBI" id="CHEBI:29108"/>
        <label>4</label>
    </ligand>
</feature>
<feature type="modified residue" description="N-acetylalanine" evidence="1">
    <location>
        <position position="2"/>
    </location>
</feature>
<feature type="modified residue" description="N6,N6,N6-trimethyllysine" evidence="1">
    <location>
        <position position="116"/>
    </location>
</feature>